<evidence type="ECO:0000250" key="1"/>
<evidence type="ECO:0000305" key="2"/>
<accession>Q931R3</accession>
<reference key="1">
    <citation type="journal article" date="2001" name="Lancet">
        <title>Whole genome sequencing of meticillin-resistant Staphylococcus aureus.</title>
        <authorList>
            <person name="Kuroda M."/>
            <person name="Ohta T."/>
            <person name="Uchiyama I."/>
            <person name="Baba T."/>
            <person name="Yuzawa H."/>
            <person name="Kobayashi I."/>
            <person name="Cui L."/>
            <person name="Oguchi A."/>
            <person name="Aoki K."/>
            <person name="Nagai Y."/>
            <person name="Lian J.-Q."/>
            <person name="Ito T."/>
            <person name="Kanamori M."/>
            <person name="Matsumaru H."/>
            <person name="Maruyama A."/>
            <person name="Murakami H."/>
            <person name="Hosoyama A."/>
            <person name="Mizutani-Ui Y."/>
            <person name="Takahashi N.K."/>
            <person name="Sawano T."/>
            <person name="Inoue R."/>
            <person name="Kaito C."/>
            <person name="Sekimizu K."/>
            <person name="Hirakawa H."/>
            <person name="Kuhara S."/>
            <person name="Goto S."/>
            <person name="Yabuzaki J."/>
            <person name="Kanehisa M."/>
            <person name="Yamashita A."/>
            <person name="Oshima K."/>
            <person name="Furuya K."/>
            <person name="Yoshino C."/>
            <person name="Shiba T."/>
            <person name="Hattori M."/>
            <person name="Ogasawara N."/>
            <person name="Hayashi H."/>
            <person name="Hiramatsu K."/>
        </authorList>
    </citation>
    <scope>NUCLEOTIDE SEQUENCE [LARGE SCALE GENOMIC DNA]</scope>
    <source>
        <strain>Mu50 / ATCC 700699</strain>
    </source>
</reference>
<dbReference type="EC" id="1.1.1.44"/>
<dbReference type="EMBL" id="BA000017">
    <property type="protein sequence ID" value="BAB57673.1"/>
    <property type="molecule type" value="Genomic_DNA"/>
</dbReference>
<dbReference type="RefSeq" id="WP_000193704.1">
    <property type="nucleotide sequence ID" value="NC_002758.2"/>
</dbReference>
<dbReference type="SMR" id="Q931R3"/>
<dbReference type="KEGG" id="sav:SAV1511"/>
<dbReference type="HOGENOM" id="CLU_024540_4_2_9"/>
<dbReference type="PhylomeDB" id="Q931R3"/>
<dbReference type="UniPathway" id="UPA00115">
    <property type="reaction ID" value="UER00410"/>
</dbReference>
<dbReference type="Proteomes" id="UP000002481">
    <property type="component" value="Chromosome"/>
</dbReference>
<dbReference type="GO" id="GO:0050661">
    <property type="term" value="F:NADP binding"/>
    <property type="evidence" value="ECO:0007669"/>
    <property type="project" value="InterPro"/>
</dbReference>
<dbReference type="GO" id="GO:0004616">
    <property type="term" value="F:phosphogluconate dehydrogenase (decarboxylating) activity"/>
    <property type="evidence" value="ECO:0007669"/>
    <property type="project" value="UniProtKB-EC"/>
</dbReference>
<dbReference type="GO" id="GO:0019521">
    <property type="term" value="P:D-gluconate metabolic process"/>
    <property type="evidence" value="ECO:0007669"/>
    <property type="project" value="UniProtKB-KW"/>
</dbReference>
<dbReference type="GO" id="GO:0016054">
    <property type="term" value="P:organic acid catabolic process"/>
    <property type="evidence" value="ECO:0007669"/>
    <property type="project" value="UniProtKB-ARBA"/>
</dbReference>
<dbReference type="GO" id="GO:0006098">
    <property type="term" value="P:pentose-phosphate shunt"/>
    <property type="evidence" value="ECO:0007669"/>
    <property type="project" value="UniProtKB-UniPathway"/>
</dbReference>
<dbReference type="FunFam" id="1.10.1040.10:FF:000002">
    <property type="entry name" value="6-phosphogluconate dehydrogenase, decarboxylating"/>
    <property type="match status" value="1"/>
</dbReference>
<dbReference type="FunFam" id="1.20.5.320:FF:000001">
    <property type="entry name" value="6-phosphogluconate dehydrogenase, decarboxylating"/>
    <property type="match status" value="1"/>
</dbReference>
<dbReference type="FunFam" id="3.40.50.720:FF:000007">
    <property type="entry name" value="6-phosphogluconate dehydrogenase, decarboxylating"/>
    <property type="match status" value="1"/>
</dbReference>
<dbReference type="Gene3D" id="1.20.5.320">
    <property type="entry name" value="6-Phosphogluconate Dehydrogenase, domain 3"/>
    <property type="match status" value="1"/>
</dbReference>
<dbReference type="Gene3D" id="1.10.1040.10">
    <property type="entry name" value="N-(1-d-carboxylethyl)-l-norvaline Dehydrogenase, domain 2"/>
    <property type="match status" value="1"/>
</dbReference>
<dbReference type="Gene3D" id="3.40.50.720">
    <property type="entry name" value="NAD(P)-binding Rossmann-like Domain"/>
    <property type="match status" value="1"/>
</dbReference>
<dbReference type="InterPro" id="IPR008927">
    <property type="entry name" value="6-PGluconate_DH-like_C_sf"/>
</dbReference>
<dbReference type="InterPro" id="IPR013328">
    <property type="entry name" value="6PGD_dom2"/>
</dbReference>
<dbReference type="InterPro" id="IPR006114">
    <property type="entry name" value="6PGDH_C"/>
</dbReference>
<dbReference type="InterPro" id="IPR006113">
    <property type="entry name" value="6PGDH_Gnd/GntZ"/>
</dbReference>
<dbReference type="InterPro" id="IPR006115">
    <property type="entry name" value="6PGDH_NADP-bd"/>
</dbReference>
<dbReference type="InterPro" id="IPR006184">
    <property type="entry name" value="6PGdom_BS"/>
</dbReference>
<dbReference type="InterPro" id="IPR036291">
    <property type="entry name" value="NAD(P)-bd_dom_sf"/>
</dbReference>
<dbReference type="InterPro" id="IPR006183">
    <property type="entry name" value="Pgluconate_DH"/>
</dbReference>
<dbReference type="NCBIfam" id="TIGR00873">
    <property type="entry name" value="gnd"/>
    <property type="match status" value="1"/>
</dbReference>
<dbReference type="NCBIfam" id="NF006765">
    <property type="entry name" value="PRK09287.1"/>
    <property type="match status" value="1"/>
</dbReference>
<dbReference type="PANTHER" id="PTHR11811">
    <property type="entry name" value="6-PHOSPHOGLUCONATE DEHYDROGENASE"/>
    <property type="match status" value="1"/>
</dbReference>
<dbReference type="Pfam" id="PF00393">
    <property type="entry name" value="6PGD"/>
    <property type="match status" value="1"/>
</dbReference>
<dbReference type="Pfam" id="PF03446">
    <property type="entry name" value="NAD_binding_2"/>
    <property type="match status" value="1"/>
</dbReference>
<dbReference type="PIRSF" id="PIRSF000109">
    <property type="entry name" value="6PGD"/>
    <property type="match status" value="1"/>
</dbReference>
<dbReference type="PRINTS" id="PR00076">
    <property type="entry name" value="6PGDHDRGNASE"/>
</dbReference>
<dbReference type="SMART" id="SM01350">
    <property type="entry name" value="6PGD"/>
    <property type="match status" value="1"/>
</dbReference>
<dbReference type="SUPFAM" id="SSF48179">
    <property type="entry name" value="6-phosphogluconate dehydrogenase C-terminal domain-like"/>
    <property type="match status" value="1"/>
</dbReference>
<dbReference type="SUPFAM" id="SSF51735">
    <property type="entry name" value="NAD(P)-binding Rossmann-fold domains"/>
    <property type="match status" value="1"/>
</dbReference>
<dbReference type="PROSITE" id="PS00461">
    <property type="entry name" value="6PGD"/>
    <property type="match status" value="1"/>
</dbReference>
<protein>
    <recommendedName>
        <fullName>6-phosphogluconate dehydrogenase, decarboxylating</fullName>
        <ecNumber>1.1.1.44</ecNumber>
    </recommendedName>
</protein>
<gene>
    <name type="primary">gnd</name>
    <name type="ordered locus">SAV1511</name>
</gene>
<comment type="function">
    <text evidence="1">Catalyzes the oxidative decarboxylation of 6-phosphogluconate to ribulose 5-phosphate and CO(2), with concomitant reduction of NADP to NADPH.</text>
</comment>
<comment type="catalytic activity">
    <reaction>
        <text>6-phospho-D-gluconate + NADP(+) = D-ribulose 5-phosphate + CO2 + NADPH</text>
        <dbReference type="Rhea" id="RHEA:10116"/>
        <dbReference type="ChEBI" id="CHEBI:16526"/>
        <dbReference type="ChEBI" id="CHEBI:57783"/>
        <dbReference type="ChEBI" id="CHEBI:58121"/>
        <dbReference type="ChEBI" id="CHEBI:58349"/>
        <dbReference type="ChEBI" id="CHEBI:58759"/>
        <dbReference type="EC" id="1.1.1.44"/>
    </reaction>
</comment>
<comment type="pathway">
    <text>Carbohydrate degradation; pentose phosphate pathway; D-ribulose 5-phosphate from D-glucose 6-phosphate (oxidative stage): step 3/3.</text>
</comment>
<comment type="subunit">
    <text evidence="1">Homodimer.</text>
</comment>
<comment type="similarity">
    <text evidence="2">Belongs to the 6-phosphogluconate dehydrogenase family.</text>
</comment>
<organism>
    <name type="scientific">Staphylococcus aureus (strain Mu50 / ATCC 700699)</name>
    <dbReference type="NCBI Taxonomy" id="158878"/>
    <lineage>
        <taxon>Bacteria</taxon>
        <taxon>Bacillati</taxon>
        <taxon>Bacillota</taxon>
        <taxon>Bacilli</taxon>
        <taxon>Bacillales</taxon>
        <taxon>Staphylococcaceae</taxon>
        <taxon>Staphylococcus</taxon>
    </lineage>
</organism>
<name>6PGD_STAAM</name>
<feature type="chain" id="PRO_0000090054" description="6-phosphogluconate dehydrogenase, decarboxylating">
    <location>
        <begin position="1"/>
        <end position="468"/>
    </location>
</feature>
<feature type="active site" description="Proton acceptor" evidence="1">
    <location>
        <position position="182"/>
    </location>
</feature>
<feature type="active site" description="Proton donor" evidence="1">
    <location>
        <position position="189"/>
    </location>
</feature>
<feature type="binding site" evidence="1">
    <location>
        <begin position="9"/>
        <end position="14"/>
    </location>
    <ligand>
        <name>NADP(+)</name>
        <dbReference type="ChEBI" id="CHEBI:58349"/>
    </ligand>
</feature>
<feature type="binding site" evidence="1">
    <location>
        <begin position="32"/>
        <end position="34"/>
    </location>
    <ligand>
        <name>NADP(+)</name>
        <dbReference type="ChEBI" id="CHEBI:58349"/>
    </ligand>
</feature>
<feature type="binding site" evidence="1">
    <location>
        <begin position="73"/>
        <end position="75"/>
    </location>
    <ligand>
        <name>NADP(+)</name>
        <dbReference type="ChEBI" id="CHEBI:58349"/>
    </ligand>
</feature>
<feature type="binding site" evidence="1">
    <location>
        <position position="101"/>
    </location>
    <ligand>
        <name>NADP(+)</name>
        <dbReference type="ChEBI" id="CHEBI:58349"/>
    </ligand>
</feature>
<feature type="binding site" description="in other chain" evidence="1">
    <location>
        <position position="101"/>
    </location>
    <ligand>
        <name>substrate</name>
        <note>ligand shared between dimeric partners</note>
    </ligand>
</feature>
<feature type="binding site" description="in other chain" evidence="1">
    <location>
        <begin position="127"/>
        <end position="129"/>
    </location>
    <ligand>
        <name>substrate</name>
        <note>ligand shared between dimeric partners</note>
    </ligand>
</feature>
<feature type="binding site" description="in other chain" evidence="1">
    <location>
        <begin position="185"/>
        <end position="186"/>
    </location>
    <ligand>
        <name>substrate</name>
        <note>ligand shared between dimeric partners</note>
    </ligand>
</feature>
<feature type="binding site" description="in other chain" evidence="1">
    <location>
        <position position="190"/>
    </location>
    <ligand>
        <name>substrate</name>
        <note>ligand shared between dimeric partners</note>
    </ligand>
</feature>
<feature type="binding site" description="in other chain" evidence="1">
    <location>
        <position position="259"/>
    </location>
    <ligand>
        <name>substrate</name>
        <note>ligand shared between dimeric partners</note>
    </ligand>
</feature>
<feature type="binding site" description="in other chain" evidence="1">
    <location>
        <position position="286"/>
    </location>
    <ligand>
        <name>substrate</name>
        <note>ligand shared between dimeric partners</note>
    </ligand>
</feature>
<feature type="binding site" evidence="1">
    <location>
        <position position="444"/>
    </location>
    <ligand>
        <name>substrate</name>
        <note>ligand shared between dimeric partners</note>
    </ligand>
</feature>
<feature type="binding site" evidence="1">
    <location>
        <position position="450"/>
    </location>
    <ligand>
        <name>substrate</name>
        <note>ligand shared between dimeric partners</note>
    </ligand>
</feature>
<keyword id="KW-0311">Gluconate utilization</keyword>
<keyword id="KW-0521">NADP</keyword>
<keyword id="KW-0560">Oxidoreductase</keyword>
<keyword id="KW-0570">Pentose shunt</keyword>
<sequence length="468" mass="51784">MTQQIGVIGLAVMGKNLAWNIESHGYSVSVFNRSSEKTDLMVEESKGKNIHPTYSLEEFVNSLEKPRKILLMVQAGKATDATIDSLLPLLDDGDILIDGGNTNYQDTIRRNKALAQSAINFIGMGVSGGEIGALTGPSLMPGGQEEAYNKVADILDAIAAKAKDGASCVTYIGPNGAGHYVKMVHNGIEYADMQLIAESYAMMKELLGMSHEDIAQTFKDWNAGELESYLIEITGDIFMKLDENKEALVEKILDTAGQKGTGKWTSINALELGIPLTIITESVFARFISSIKEERVNASKELNGPKASFDGDKKDFLEKIRKALYMSKICSYAQGFAQMRKASEDNEWNLKLGDLAMIWREGCIIRAQFLQKIKDAYDNNPGLQNLLLDPYFKNIVTEYQDALRDVVATGVQNGVPTPGFSSSINYYDSYRAADLPANLIQAQRDYFGAHTYERKDKEGVFHTQWIEE</sequence>
<proteinExistence type="inferred from homology"/>